<feature type="chain" id="PRO_0000239163" description="DEAD-box ATP-dependent RNA helicase 22">
    <location>
        <begin position="1"/>
        <end position="581"/>
    </location>
</feature>
<feature type="domain" description="Helicase ATP-binding" evidence="1">
    <location>
        <begin position="111"/>
        <end position="380"/>
    </location>
</feature>
<feature type="domain" description="Helicase C-terminal" evidence="2">
    <location>
        <begin position="408"/>
        <end position="566"/>
    </location>
</feature>
<feature type="short sequence motif" description="Q motif">
    <location>
        <begin position="80"/>
        <end position="108"/>
    </location>
</feature>
<feature type="short sequence motif" description="DEAD box">
    <location>
        <begin position="244"/>
        <end position="247"/>
    </location>
</feature>
<feature type="binding site" evidence="1">
    <location>
        <begin position="124"/>
        <end position="131"/>
    </location>
    <ligand>
        <name>ATP</name>
        <dbReference type="ChEBI" id="CHEBI:30616"/>
    </ligand>
</feature>
<feature type="sequence conflict" description="In Ref. 5; CAA72075." evidence="3" ref="5">
    <original>A</original>
    <variation>F</variation>
    <location>
        <position position="76"/>
    </location>
</feature>
<gene>
    <name type="primary">RH22</name>
    <name type="ordered locus">At1g59990</name>
    <name type="ORF">T2K10.4</name>
</gene>
<protein>
    <recommendedName>
        <fullName>DEAD-box ATP-dependent RNA helicase 22</fullName>
        <ecNumber>3.6.4.13</ecNumber>
    </recommendedName>
</protein>
<accession>Q944S1</accession>
<accession>O24597</accession>
<accession>Q9ZNU1</accession>
<name>RH22_ARATH</name>
<dbReference type="EC" id="3.6.4.13"/>
<dbReference type="EMBL" id="AC005966">
    <property type="protein sequence ID" value="AAD14475.1"/>
    <property type="status" value="ALT_INIT"/>
    <property type="molecule type" value="Genomic_DNA"/>
</dbReference>
<dbReference type="EMBL" id="CP002684">
    <property type="protein sequence ID" value="AEE33647.1"/>
    <property type="molecule type" value="Genomic_DNA"/>
</dbReference>
<dbReference type="EMBL" id="AF424570">
    <property type="protein sequence ID" value="AAL11564.1"/>
    <property type="molecule type" value="mRNA"/>
</dbReference>
<dbReference type="EMBL" id="AY142022">
    <property type="protein sequence ID" value="AAM98286.1"/>
    <property type="molecule type" value="mRNA"/>
</dbReference>
<dbReference type="EMBL" id="AJ010471">
    <property type="protein sequence ID" value="CAA09210.1"/>
    <property type="molecule type" value="mRNA"/>
</dbReference>
<dbReference type="EMBL" id="Y11190">
    <property type="protein sequence ID" value="CAA72075.1"/>
    <property type="molecule type" value="mRNA"/>
</dbReference>
<dbReference type="PIR" id="B96624">
    <property type="entry name" value="B96624"/>
</dbReference>
<dbReference type="PIR" id="T51346">
    <property type="entry name" value="T51346"/>
</dbReference>
<dbReference type="SMR" id="Q944S1"/>
<dbReference type="BioGRID" id="27518">
    <property type="interactions" value="4"/>
</dbReference>
<dbReference type="FunCoup" id="Q944S1">
    <property type="interactions" value="436"/>
</dbReference>
<dbReference type="IntAct" id="Q944S1">
    <property type="interactions" value="1"/>
</dbReference>
<dbReference type="STRING" id="3702.Q944S1"/>
<dbReference type="PaxDb" id="3702-AT1G59990.1"/>
<dbReference type="ProteomicsDB" id="236942"/>
<dbReference type="EnsemblPlants" id="AT1G59990.1">
    <property type="protein sequence ID" value="AT1G59990.1"/>
    <property type="gene ID" value="AT1G59990"/>
</dbReference>
<dbReference type="GeneID" id="842293"/>
<dbReference type="Gramene" id="AT1G59990.1">
    <property type="protein sequence ID" value="AT1G59990.1"/>
    <property type="gene ID" value="AT1G59990"/>
</dbReference>
<dbReference type="KEGG" id="ath:AT1G59990"/>
<dbReference type="Araport" id="AT1G59990"/>
<dbReference type="TAIR" id="AT1G59990">
    <property type="gene designation" value="EMB3108"/>
</dbReference>
<dbReference type="eggNOG" id="KOG0333">
    <property type="taxonomic scope" value="Eukaryota"/>
</dbReference>
<dbReference type="HOGENOM" id="CLU_003041_1_8_1"/>
<dbReference type="InParanoid" id="Q944S1"/>
<dbReference type="OMA" id="DFQQKGG"/>
<dbReference type="PhylomeDB" id="Q944S1"/>
<dbReference type="PRO" id="PR:Q944S1"/>
<dbReference type="Proteomes" id="UP000006548">
    <property type="component" value="Chromosome 1"/>
</dbReference>
<dbReference type="ExpressionAtlas" id="Q944S1">
    <property type="expression patterns" value="baseline and differential"/>
</dbReference>
<dbReference type="GO" id="GO:0009507">
    <property type="term" value="C:chloroplast"/>
    <property type="evidence" value="ECO:0007005"/>
    <property type="project" value="TAIR"/>
</dbReference>
<dbReference type="GO" id="GO:0005524">
    <property type="term" value="F:ATP binding"/>
    <property type="evidence" value="ECO:0007669"/>
    <property type="project" value="UniProtKB-KW"/>
</dbReference>
<dbReference type="GO" id="GO:0016887">
    <property type="term" value="F:ATP hydrolysis activity"/>
    <property type="evidence" value="ECO:0007669"/>
    <property type="project" value="RHEA"/>
</dbReference>
<dbReference type="GO" id="GO:0003729">
    <property type="term" value="F:mRNA binding"/>
    <property type="evidence" value="ECO:0000314"/>
    <property type="project" value="TAIR"/>
</dbReference>
<dbReference type="GO" id="GO:0003724">
    <property type="term" value="F:RNA helicase activity"/>
    <property type="evidence" value="ECO:0007669"/>
    <property type="project" value="UniProtKB-EC"/>
</dbReference>
<dbReference type="CDD" id="cd00268">
    <property type="entry name" value="DEADc"/>
    <property type="match status" value="1"/>
</dbReference>
<dbReference type="CDD" id="cd18787">
    <property type="entry name" value="SF2_C_DEAD"/>
    <property type="match status" value="1"/>
</dbReference>
<dbReference type="FunFam" id="3.40.50.300:FF:002789">
    <property type="entry name" value="DEAD-box ATP-dependent RNA helicase 22"/>
    <property type="match status" value="1"/>
</dbReference>
<dbReference type="Gene3D" id="3.40.50.300">
    <property type="entry name" value="P-loop containing nucleotide triphosphate hydrolases"/>
    <property type="match status" value="2"/>
</dbReference>
<dbReference type="InterPro" id="IPR011545">
    <property type="entry name" value="DEAD/DEAH_box_helicase_dom"/>
</dbReference>
<dbReference type="InterPro" id="IPR014001">
    <property type="entry name" value="Helicase_ATP-bd"/>
</dbReference>
<dbReference type="InterPro" id="IPR001650">
    <property type="entry name" value="Helicase_C-like"/>
</dbReference>
<dbReference type="InterPro" id="IPR027417">
    <property type="entry name" value="P-loop_NTPase"/>
</dbReference>
<dbReference type="InterPro" id="IPR014014">
    <property type="entry name" value="RNA_helicase_DEAD_Q_motif"/>
</dbReference>
<dbReference type="PANTHER" id="PTHR47958">
    <property type="entry name" value="ATP-DEPENDENT RNA HELICASE DBP3"/>
    <property type="match status" value="1"/>
</dbReference>
<dbReference type="Pfam" id="PF00270">
    <property type="entry name" value="DEAD"/>
    <property type="match status" value="1"/>
</dbReference>
<dbReference type="Pfam" id="PF00271">
    <property type="entry name" value="Helicase_C"/>
    <property type="match status" value="1"/>
</dbReference>
<dbReference type="SMART" id="SM00487">
    <property type="entry name" value="DEXDc"/>
    <property type="match status" value="1"/>
</dbReference>
<dbReference type="SMART" id="SM00490">
    <property type="entry name" value="HELICc"/>
    <property type="match status" value="1"/>
</dbReference>
<dbReference type="SUPFAM" id="SSF52540">
    <property type="entry name" value="P-loop containing nucleoside triphosphate hydrolases"/>
    <property type="match status" value="1"/>
</dbReference>
<dbReference type="PROSITE" id="PS51192">
    <property type="entry name" value="HELICASE_ATP_BIND_1"/>
    <property type="match status" value="1"/>
</dbReference>
<dbReference type="PROSITE" id="PS51194">
    <property type="entry name" value="HELICASE_CTER"/>
    <property type="match status" value="1"/>
</dbReference>
<dbReference type="PROSITE" id="PS51195">
    <property type="entry name" value="Q_MOTIF"/>
    <property type="match status" value="1"/>
</dbReference>
<sequence length="581" mass="64747">MILSRSVSVLHLCGVSSSAPSKLLSQRFKVSFALAYGSSVSFRLSSLNRSDRKWVRGFASATEAEVEKKGNDTFFADHTVSWKSLGLSDNVSIALRDSGFDRPSLTQAVCIPSILSGKDVIVAAETGSGKTHGYLAPIIDQLTNTALDSEVTNREERPFPLKNISLILCPNVMLCEQVVRMVNGLVDEDGNPLLRVEAVCGSQGWPDRLPDIIVSTPAALLNNIEPKRNRRLEFLRCVKYVVFDEADMLLCGSFQNQIIRLINMLRFDEKQVSRLAKSNLGRPMEIDASVPQIDLENEDDAEFDEGSISEEEDEEEEEEYLDDIAQMPSVEAEAGSDTKKGWRRVRKIYTRSKQYIFIAATLPVNGKKTAGGILKHMFQDAVWVSGNFLHRNSPRLKQKWVEVTVDSQVDALIEAVKNNNNTNTERTMVFANTVEAVEAVADILEKASIQCYRYHKNHKLDERANILADFRETGGVFVCTDAAARGVDVPNVSHVIQADFASSAVDFLHRIGRTARAGQYGTVTSLYTEANRDLVEAIREAVKMGQPVETAFSRKRGFRNKVKKRAFLKAEEAEEPQAVRY</sequence>
<keyword id="KW-0067">ATP-binding</keyword>
<keyword id="KW-0347">Helicase</keyword>
<keyword id="KW-0378">Hydrolase</keyword>
<keyword id="KW-0547">Nucleotide-binding</keyword>
<keyword id="KW-1185">Reference proteome</keyword>
<keyword id="KW-0694">RNA-binding</keyword>
<reference key="1">
    <citation type="journal article" date="2000" name="Nature">
        <title>Sequence and analysis of chromosome 1 of the plant Arabidopsis thaliana.</title>
        <authorList>
            <person name="Theologis A."/>
            <person name="Ecker J.R."/>
            <person name="Palm C.J."/>
            <person name="Federspiel N.A."/>
            <person name="Kaul S."/>
            <person name="White O."/>
            <person name="Alonso J."/>
            <person name="Altafi H."/>
            <person name="Araujo R."/>
            <person name="Bowman C.L."/>
            <person name="Brooks S.Y."/>
            <person name="Buehler E."/>
            <person name="Chan A."/>
            <person name="Chao Q."/>
            <person name="Chen H."/>
            <person name="Cheuk R.F."/>
            <person name="Chin C.W."/>
            <person name="Chung M.K."/>
            <person name="Conn L."/>
            <person name="Conway A.B."/>
            <person name="Conway A.R."/>
            <person name="Creasy T.H."/>
            <person name="Dewar K."/>
            <person name="Dunn P."/>
            <person name="Etgu P."/>
            <person name="Feldblyum T.V."/>
            <person name="Feng J.-D."/>
            <person name="Fong B."/>
            <person name="Fujii C.Y."/>
            <person name="Gill J.E."/>
            <person name="Goldsmith A.D."/>
            <person name="Haas B."/>
            <person name="Hansen N.F."/>
            <person name="Hughes B."/>
            <person name="Huizar L."/>
            <person name="Hunter J.L."/>
            <person name="Jenkins J."/>
            <person name="Johnson-Hopson C."/>
            <person name="Khan S."/>
            <person name="Khaykin E."/>
            <person name="Kim C.J."/>
            <person name="Koo H.L."/>
            <person name="Kremenetskaia I."/>
            <person name="Kurtz D.B."/>
            <person name="Kwan A."/>
            <person name="Lam B."/>
            <person name="Langin-Hooper S."/>
            <person name="Lee A."/>
            <person name="Lee J.M."/>
            <person name="Lenz C.A."/>
            <person name="Li J.H."/>
            <person name="Li Y.-P."/>
            <person name="Lin X."/>
            <person name="Liu S.X."/>
            <person name="Liu Z.A."/>
            <person name="Luros J.S."/>
            <person name="Maiti R."/>
            <person name="Marziali A."/>
            <person name="Militscher J."/>
            <person name="Miranda M."/>
            <person name="Nguyen M."/>
            <person name="Nierman W.C."/>
            <person name="Osborne B.I."/>
            <person name="Pai G."/>
            <person name="Peterson J."/>
            <person name="Pham P.K."/>
            <person name="Rizzo M."/>
            <person name="Rooney T."/>
            <person name="Rowley D."/>
            <person name="Sakano H."/>
            <person name="Salzberg S.L."/>
            <person name="Schwartz J.R."/>
            <person name="Shinn P."/>
            <person name="Southwick A.M."/>
            <person name="Sun H."/>
            <person name="Tallon L.J."/>
            <person name="Tambunga G."/>
            <person name="Toriumi M.J."/>
            <person name="Town C.D."/>
            <person name="Utterback T."/>
            <person name="Van Aken S."/>
            <person name="Vaysberg M."/>
            <person name="Vysotskaia V.S."/>
            <person name="Walker M."/>
            <person name="Wu D."/>
            <person name="Yu G."/>
            <person name="Fraser C.M."/>
            <person name="Venter J.C."/>
            <person name="Davis R.W."/>
        </authorList>
    </citation>
    <scope>NUCLEOTIDE SEQUENCE [LARGE SCALE GENOMIC DNA]</scope>
    <source>
        <strain>cv. Columbia</strain>
    </source>
</reference>
<reference key="2">
    <citation type="journal article" date="2017" name="Plant J.">
        <title>Araport11: a complete reannotation of the Arabidopsis thaliana reference genome.</title>
        <authorList>
            <person name="Cheng C.Y."/>
            <person name="Krishnakumar V."/>
            <person name="Chan A.P."/>
            <person name="Thibaud-Nissen F."/>
            <person name="Schobel S."/>
            <person name="Town C.D."/>
        </authorList>
    </citation>
    <scope>GENOME REANNOTATION</scope>
    <source>
        <strain>cv. Columbia</strain>
    </source>
</reference>
<reference key="3">
    <citation type="journal article" date="2003" name="Science">
        <title>Empirical analysis of transcriptional activity in the Arabidopsis genome.</title>
        <authorList>
            <person name="Yamada K."/>
            <person name="Lim J."/>
            <person name="Dale J.M."/>
            <person name="Chen H."/>
            <person name="Shinn P."/>
            <person name="Palm C.J."/>
            <person name="Southwick A.M."/>
            <person name="Wu H.C."/>
            <person name="Kim C.J."/>
            <person name="Nguyen M."/>
            <person name="Pham P.K."/>
            <person name="Cheuk R.F."/>
            <person name="Karlin-Newmann G."/>
            <person name="Liu S.X."/>
            <person name="Lam B."/>
            <person name="Sakano H."/>
            <person name="Wu T."/>
            <person name="Yu G."/>
            <person name="Miranda M."/>
            <person name="Quach H.L."/>
            <person name="Tripp M."/>
            <person name="Chang C.H."/>
            <person name="Lee J.M."/>
            <person name="Toriumi M.J."/>
            <person name="Chan M.M."/>
            <person name="Tang C.C."/>
            <person name="Onodera C.S."/>
            <person name="Deng J.M."/>
            <person name="Akiyama K."/>
            <person name="Ansari Y."/>
            <person name="Arakawa T."/>
            <person name="Banh J."/>
            <person name="Banno F."/>
            <person name="Bowser L."/>
            <person name="Brooks S.Y."/>
            <person name="Carninci P."/>
            <person name="Chao Q."/>
            <person name="Choy N."/>
            <person name="Enju A."/>
            <person name="Goldsmith A.D."/>
            <person name="Gurjal M."/>
            <person name="Hansen N.F."/>
            <person name="Hayashizaki Y."/>
            <person name="Johnson-Hopson C."/>
            <person name="Hsuan V.W."/>
            <person name="Iida K."/>
            <person name="Karnes M."/>
            <person name="Khan S."/>
            <person name="Koesema E."/>
            <person name="Ishida J."/>
            <person name="Jiang P.X."/>
            <person name="Jones T."/>
            <person name="Kawai J."/>
            <person name="Kamiya A."/>
            <person name="Meyers C."/>
            <person name="Nakajima M."/>
            <person name="Narusaka M."/>
            <person name="Seki M."/>
            <person name="Sakurai T."/>
            <person name="Satou M."/>
            <person name="Tamse R."/>
            <person name="Vaysberg M."/>
            <person name="Wallender E.K."/>
            <person name="Wong C."/>
            <person name="Yamamura Y."/>
            <person name="Yuan S."/>
            <person name="Shinozaki K."/>
            <person name="Davis R.W."/>
            <person name="Theologis A."/>
            <person name="Ecker J.R."/>
        </authorList>
    </citation>
    <scope>NUCLEOTIDE SEQUENCE [LARGE SCALE MRNA]</scope>
    <source>
        <strain>cv. Columbia</strain>
    </source>
</reference>
<reference key="4">
    <citation type="journal article" date="1999" name="Nucleic Acids Res.">
        <title>The DEAD box RNA helicase family in Arabidopsis thaliana.</title>
        <authorList>
            <person name="Aubourg S."/>
            <person name="Kreis M."/>
            <person name="Lecharny A."/>
        </authorList>
    </citation>
    <scope>NUCLEOTIDE SEQUENCE [MRNA] OF 77-581</scope>
    <source>
        <strain>cv. Columbia</strain>
    </source>
</reference>
<reference key="5">
    <citation type="journal article" date="1997" name="Gene">
        <title>Structure, organization and putative function of the genes identified within a 23.9 kb fragment from Arabidopsis thaliana chromosome IV sequenced in the framework of the ESSA programme.</title>
        <authorList>
            <person name="Aubourg S."/>
            <person name="Takvorian A."/>
            <person name="Cheron A."/>
            <person name="Kreis M."/>
            <person name="Lecharny A."/>
        </authorList>
    </citation>
    <scope>NUCLEOTIDE SEQUENCE [MRNA] OF 74-275</scope>
    <source>
        <strain>cv. Columbia</strain>
        <tissue>Shoot</tissue>
    </source>
</reference>
<reference key="6">
    <citation type="journal article" date="2004" name="Plant Biotechnol. J.">
        <title>DEAD-box RNA helicases in Arabidopsis thaliana: establishing a link between quantitative expression, gene structure and evolution of a family of genes.</title>
        <authorList>
            <person name="Mingam A."/>
            <person name="Toffano-Nioche C."/>
            <person name="Brunaud V."/>
            <person name="Boudet N."/>
            <person name="Kreis M."/>
            <person name="Lecharny A."/>
        </authorList>
    </citation>
    <scope>GENE FAMILY</scope>
    <scope>NOMENCLATURE</scope>
</reference>
<reference key="7">
    <citation type="journal article" date="2013" name="PLoS ONE">
        <title>Genome-wide comparative in silico analysis of the RNA helicase gene family in Zea mays and Glycine max: a comparison with Arabidopsis and Oryza sativa.</title>
        <authorList>
            <person name="Xu R."/>
            <person name="Zhang S."/>
            <person name="Huang J."/>
            <person name="Zheng C."/>
        </authorList>
    </citation>
    <scope>GENE FAMILY</scope>
</reference>
<proteinExistence type="evidence at transcript level"/>
<organism>
    <name type="scientific">Arabidopsis thaliana</name>
    <name type="common">Mouse-ear cress</name>
    <dbReference type="NCBI Taxonomy" id="3702"/>
    <lineage>
        <taxon>Eukaryota</taxon>
        <taxon>Viridiplantae</taxon>
        <taxon>Streptophyta</taxon>
        <taxon>Embryophyta</taxon>
        <taxon>Tracheophyta</taxon>
        <taxon>Spermatophyta</taxon>
        <taxon>Magnoliopsida</taxon>
        <taxon>eudicotyledons</taxon>
        <taxon>Gunneridae</taxon>
        <taxon>Pentapetalae</taxon>
        <taxon>rosids</taxon>
        <taxon>malvids</taxon>
        <taxon>Brassicales</taxon>
        <taxon>Brassicaceae</taxon>
        <taxon>Camelineae</taxon>
        <taxon>Arabidopsis</taxon>
    </lineage>
</organism>
<evidence type="ECO:0000255" key="1">
    <source>
        <dbReference type="PROSITE-ProRule" id="PRU00541"/>
    </source>
</evidence>
<evidence type="ECO:0000255" key="2">
    <source>
        <dbReference type="PROSITE-ProRule" id="PRU00542"/>
    </source>
</evidence>
<evidence type="ECO:0000305" key="3"/>
<comment type="catalytic activity">
    <reaction>
        <text>ATP + H2O = ADP + phosphate + H(+)</text>
        <dbReference type="Rhea" id="RHEA:13065"/>
        <dbReference type="ChEBI" id="CHEBI:15377"/>
        <dbReference type="ChEBI" id="CHEBI:15378"/>
        <dbReference type="ChEBI" id="CHEBI:30616"/>
        <dbReference type="ChEBI" id="CHEBI:43474"/>
        <dbReference type="ChEBI" id="CHEBI:456216"/>
        <dbReference type="EC" id="3.6.4.13"/>
    </reaction>
</comment>
<comment type="domain">
    <text>The Q motif is unique to and characteristic of the DEAD box family of RNA helicases and controls ATP binding and hydrolysis.</text>
</comment>
<comment type="similarity">
    <text evidence="3">Belongs to the DEAD box helicase family.</text>
</comment>
<comment type="sequence caution" evidence="3">
    <conflict type="erroneous initiation">
        <sequence resource="EMBL-CDS" id="AAD14475"/>
    </conflict>
</comment>